<name>OR2W6_HUMAN</name>
<dbReference type="EMBL" id="AB065475">
    <property type="protein sequence ID" value="BAC05729.1"/>
    <property type="molecule type" value="Genomic_DNA"/>
</dbReference>
<dbReference type="EMBL" id="CH471081">
    <property type="protein sequence ID" value="EAX03126.1"/>
    <property type="molecule type" value="Genomic_DNA"/>
</dbReference>
<dbReference type="EMBL" id="BK004697">
    <property type="status" value="NOT_ANNOTATED_CDS"/>
    <property type="molecule type" value="Genomic_DNA"/>
</dbReference>
<dbReference type="SMR" id="Q8NHA6"/>
<dbReference type="FunCoup" id="Q8NHA6">
    <property type="interactions" value="791"/>
</dbReference>
<dbReference type="BioMuta" id="HGNC:15072"/>
<dbReference type="DMDM" id="74760337"/>
<dbReference type="MassIVE" id="Q8NHA6"/>
<dbReference type="PeptideAtlas" id="Q8NHA6"/>
<dbReference type="AGR" id="HGNC:15072"/>
<dbReference type="GeneCards" id="OR2W6P"/>
<dbReference type="HGNC" id="HGNC:15072">
    <property type="gene designation" value="OR2W6P"/>
</dbReference>
<dbReference type="neXtProt" id="NX_Q8NHA6"/>
<dbReference type="InParanoid" id="Q8NHA6"/>
<dbReference type="PAN-GO" id="Q8NHA6">
    <property type="GO annotations" value="0 GO annotations based on evolutionary models"/>
</dbReference>
<dbReference type="PhylomeDB" id="Q8NHA6"/>
<dbReference type="PathwayCommons" id="Q8NHA6"/>
<dbReference type="Pharos" id="Q8NHA6">
    <property type="development level" value="Tdark"/>
</dbReference>
<dbReference type="Proteomes" id="UP000005640">
    <property type="component" value="Unplaced"/>
</dbReference>
<dbReference type="RNAct" id="Q8NHA6">
    <property type="molecule type" value="protein"/>
</dbReference>
<dbReference type="GO" id="GO:0005886">
    <property type="term" value="C:plasma membrane"/>
    <property type="evidence" value="ECO:0000318"/>
    <property type="project" value="GO_Central"/>
</dbReference>
<dbReference type="GO" id="GO:0004930">
    <property type="term" value="F:G protein-coupled receptor activity"/>
    <property type="evidence" value="ECO:0007669"/>
    <property type="project" value="UniProtKB-KW"/>
</dbReference>
<dbReference type="GO" id="GO:0004984">
    <property type="term" value="F:olfactory receptor activity"/>
    <property type="evidence" value="ECO:0000318"/>
    <property type="project" value="GO_Central"/>
</dbReference>
<dbReference type="GO" id="GO:0050911">
    <property type="term" value="P:detection of chemical stimulus involved in sensory perception of smell"/>
    <property type="evidence" value="ECO:0000318"/>
    <property type="project" value="GO_Central"/>
</dbReference>
<dbReference type="CDD" id="cd15434">
    <property type="entry name" value="7tmA_OR2W-like"/>
    <property type="match status" value="1"/>
</dbReference>
<dbReference type="FunFam" id="1.20.1070.10:FF:000005">
    <property type="entry name" value="Olfactory receptor"/>
    <property type="match status" value="1"/>
</dbReference>
<dbReference type="Gene3D" id="1.20.1070.10">
    <property type="entry name" value="Rhodopsin 7-helix transmembrane proteins"/>
    <property type="match status" value="1"/>
</dbReference>
<dbReference type="InterPro" id="IPR000276">
    <property type="entry name" value="GPCR_Rhodpsn"/>
</dbReference>
<dbReference type="InterPro" id="IPR017452">
    <property type="entry name" value="GPCR_Rhodpsn_7TM"/>
</dbReference>
<dbReference type="InterPro" id="IPR000725">
    <property type="entry name" value="Olfact_rcpt"/>
</dbReference>
<dbReference type="PANTHER" id="PTHR26453">
    <property type="entry name" value="OLFACTORY RECEPTOR"/>
    <property type="match status" value="1"/>
</dbReference>
<dbReference type="Pfam" id="PF13853">
    <property type="entry name" value="7tm_4"/>
    <property type="match status" value="1"/>
</dbReference>
<dbReference type="PRINTS" id="PR00237">
    <property type="entry name" value="GPCRRHODOPSN"/>
</dbReference>
<dbReference type="PRINTS" id="PR00245">
    <property type="entry name" value="OLFACTORYR"/>
</dbReference>
<dbReference type="SUPFAM" id="SSF81321">
    <property type="entry name" value="Family A G protein-coupled receptor-like"/>
    <property type="match status" value="1"/>
</dbReference>
<dbReference type="PROSITE" id="PS00237">
    <property type="entry name" value="G_PROTEIN_RECEP_F1_1"/>
    <property type="match status" value="1"/>
</dbReference>
<dbReference type="PROSITE" id="PS50262">
    <property type="entry name" value="G_PROTEIN_RECEP_F1_2"/>
    <property type="match status" value="1"/>
</dbReference>
<sequence>MGFYHVGQAAFELLTSSFILVGFSDRPHLELIVFVVVLIFYLLTLLGNMTIVLLSALDSRLHTPMYFFLANLSFLDMCFTTGSIPQMLYNLWGPDKTISYVGCAIQLYFVLALGGVECVLLAVMAYDRYAAVCKPLHYTIIMHPRLCGQLASVAWLSGFGNSLIMAPQTLMLPRCGHRRVDHFLCEMPALIGMACVDTMMLEALAFALAIFIILAPLILILISYGYVGGTVLRIKSAAGRKKAFNTCSSHLIVVSLFYGTIIYMYLQPANTYSQDQGKFLTLFYTIVTPSVNPLIYTLRNKDVKEAMKKVLGKGSAEI</sequence>
<gene>
    <name type="primary">OR2W6P</name>
    <name type="synonym">OR2W7P</name>
</gene>
<organism>
    <name type="scientific">Homo sapiens</name>
    <name type="common">Human</name>
    <dbReference type="NCBI Taxonomy" id="9606"/>
    <lineage>
        <taxon>Eukaryota</taxon>
        <taxon>Metazoa</taxon>
        <taxon>Chordata</taxon>
        <taxon>Craniata</taxon>
        <taxon>Vertebrata</taxon>
        <taxon>Euteleostomi</taxon>
        <taxon>Mammalia</taxon>
        <taxon>Eutheria</taxon>
        <taxon>Euarchontoglires</taxon>
        <taxon>Primates</taxon>
        <taxon>Haplorrhini</taxon>
        <taxon>Catarrhini</taxon>
        <taxon>Hominidae</taxon>
        <taxon>Homo</taxon>
    </lineage>
</organism>
<protein>
    <recommendedName>
        <fullName>Putative olfactory receptor 2W6</fullName>
    </recommendedName>
    <alternativeName>
        <fullName>Olfactory receptor OR6-3</fullName>
    </alternativeName>
    <alternativeName>
        <fullName>Putative olfactory receptor 2W7</fullName>
    </alternativeName>
</protein>
<evidence type="ECO:0000255" key="1"/>
<evidence type="ECO:0000255" key="2">
    <source>
        <dbReference type="PROSITE-ProRule" id="PRU00521"/>
    </source>
</evidence>
<evidence type="ECO:0000305" key="3"/>
<feature type="chain" id="PRO_0000342512" description="Putative olfactory receptor 2W6">
    <location>
        <begin position="1"/>
        <end position="318"/>
    </location>
</feature>
<feature type="topological domain" description="Extracellular" evidence="1">
    <location>
        <begin position="1"/>
        <end position="31"/>
    </location>
</feature>
<feature type="transmembrane region" description="Helical; Name=1" evidence="1">
    <location>
        <begin position="32"/>
        <end position="52"/>
    </location>
</feature>
<feature type="topological domain" description="Cytoplasmic" evidence="1">
    <location>
        <begin position="53"/>
        <end position="63"/>
    </location>
</feature>
<feature type="transmembrane region" description="Helical; Name=2" evidence="1">
    <location>
        <begin position="64"/>
        <end position="84"/>
    </location>
</feature>
<feature type="topological domain" description="Extracellular" evidence="1">
    <location>
        <begin position="85"/>
        <end position="103"/>
    </location>
</feature>
<feature type="transmembrane region" description="Helical; Name=3" evidence="1">
    <location>
        <begin position="104"/>
        <end position="124"/>
    </location>
</feature>
<feature type="topological domain" description="Cytoplasmic" evidence="1">
    <location>
        <begin position="125"/>
        <end position="145"/>
    </location>
</feature>
<feature type="transmembrane region" description="Helical; Name=4" evidence="1">
    <location>
        <begin position="146"/>
        <end position="166"/>
    </location>
</feature>
<feature type="topological domain" description="Extracellular" evidence="1">
    <location>
        <begin position="167"/>
        <end position="202"/>
    </location>
</feature>
<feature type="transmembrane region" description="Helical; Name=5" evidence="1">
    <location>
        <begin position="203"/>
        <end position="223"/>
    </location>
</feature>
<feature type="topological domain" description="Cytoplasmic" evidence="1">
    <location>
        <begin position="224"/>
        <end position="245"/>
    </location>
</feature>
<feature type="transmembrane region" description="Helical; Name=6" evidence="1">
    <location>
        <begin position="246"/>
        <end position="266"/>
    </location>
</feature>
<feature type="topological domain" description="Extracellular" evidence="1">
    <location>
        <begin position="267"/>
        <end position="277"/>
    </location>
</feature>
<feature type="transmembrane region" description="Helical; Name=7" evidence="1">
    <location>
        <begin position="278"/>
        <end position="298"/>
    </location>
</feature>
<feature type="topological domain" description="Cytoplasmic" evidence="1">
    <location>
        <begin position="299"/>
        <end position="318"/>
    </location>
</feature>
<feature type="disulfide bond" evidence="2">
    <location>
        <begin position="103"/>
        <end position="185"/>
    </location>
</feature>
<accession>Q8NHA6</accession>
<keyword id="KW-1003">Cell membrane</keyword>
<keyword id="KW-1015">Disulfide bond</keyword>
<keyword id="KW-0297">G-protein coupled receptor</keyword>
<keyword id="KW-0472">Membrane</keyword>
<keyword id="KW-0552">Olfaction</keyword>
<keyword id="KW-0675">Receptor</keyword>
<keyword id="KW-1185">Reference proteome</keyword>
<keyword id="KW-0716">Sensory transduction</keyword>
<keyword id="KW-0807">Transducer</keyword>
<keyword id="KW-0812">Transmembrane</keyword>
<keyword id="KW-1133">Transmembrane helix</keyword>
<proteinExistence type="uncertain"/>
<comment type="function">
    <text evidence="3">Odorant receptor.</text>
</comment>
<comment type="subcellular location">
    <subcellularLocation>
        <location>Cell membrane</location>
        <topology>Multi-pass membrane protein</topology>
    </subcellularLocation>
</comment>
<comment type="similarity">
    <text evidence="2">Belongs to the G-protein coupled receptor 1 family.</text>
</comment>
<comment type="caution">
    <text evidence="3">Could be the product of a pseudogene.</text>
</comment>
<comment type="online information" name="Human Olfactory Receptor Data Exploratorium (HORDE)">
    <link uri="http://genome.weizmann.ac.il/horde/card/index/symbol:OR2W6P"/>
</comment>
<reference key="1">
    <citation type="submission" date="2001-07" db="EMBL/GenBank/DDBJ databases">
        <title>Genome-wide discovery and analysis of human seven transmembrane helix receptor genes.</title>
        <authorList>
            <person name="Suwa M."/>
            <person name="Sato T."/>
            <person name="Okouchi I."/>
            <person name="Arita M."/>
            <person name="Futami K."/>
            <person name="Matsumoto S."/>
            <person name="Tsutsumi S."/>
            <person name="Aburatani H."/>
            <person name="Asai K."/>
            <person name="Akiyama Y."/>
        </authorList>
    </citation>
    <scope>NUCLEOTIDE SEQUENCE [GENOMIC DNA]</scope>
</reference>
<reference key="2">
    <citation type="submission" date="2005-07" db="EMBL/GenBank/DDBJ databases">
        <authorList>
            <person name="Mural R.J."/>
            <person name="Istrail S."/>
            <person name="Sutton G.G."/>
            <person name="Florea L."/>
            <person name="Halpern A.L."/>
            <person name="Mobarry C.M."/>
            <person name="Lippert R."/>
            <person name="Walenz B."/>
            <person name="Shatkay H."/>
            <person name="Dew I."/>
            <person name="Miller J.R."/>
            <person name="Flanigan M.J."/>
            <person name="Edwards N.J."/>
            <person name="Bolanos R."/>
            <person name="Fasulo D."/>
            <person name="Halldorsson B.V."/>
            <person name="Hannenhalli S."/>
            <person name="Turner R."/>
            <person name="Yooseph S."/>
            <person name="Lu F."/>
            <person name="Nusskern D.R."/>
            <person name="Shue B.C."/>
            <person name="Zheng X.H."/>
            <person name="Zhong F."/>
            <person name="Delcher A.L."/>
            <person name="Huson D.H."/>
            <person name="Kravitz S.A."/>
            <person name="Mouchard L."/>
            <person name="Reinert K."/>
            <person name="Remington K.A."/>
            <person name="Clark A.G."/>
            <person name="Waterman M.S."/>
            <person name="Eichler E.E."/>
            <person name="Adams M.D."/>
            <person name="Hunkapiller M.W."/>
            <person name="Myers E.W."/>
            <person name="Venter J.C."/>
        </authorList>
    </citation>
    <scope>NUCLEOTIDE SEQUENCE [LARGE SCALE GENOMIC DNA]</scope>
</reference>
<reference key="3">
    <citation type="journal article" date="2004" name="Proc. Natl. Acad. Sci. U.S.A.">
        <title>The human olfactory receptor gene family.</title>
        <authorList>
            <person name="Malnic B."/>
            <person name="Godfrey P.A."/>
            <person name="Buck L.B."/>
        </authorList>
    </citation>
    <scope>IDENTIFICATION</scope>
</reference>
<reference key="4">
    <citation type="journal article" date="2004" name="Proc. Natl. Acad. Sci. U.S.A.">
        <authorList>
            <person name="Malnic B."/>
            <person name="Godfrey P.A."/>
            <person name="Buck L.B."/>
        </authorList>
    </citation>
    <scope>ERRATUM OF PUBMED:14983052</scope>
</reference>